<comment type="function">
    <text evidence="1">Part of the high-affinity ATP-driven potassium transport (or Kdp) system, which catalyzes the hydrolysis of ATP coupled with the electrogenic transport of potassium into the cytoplasm. This subunit is responsible for energy coupling to the transport system and for the release of the potassium ions to the cytoplasm.</text>
</comment>
<comment type="catalytic activity">
    <reaction evidence="1">
        <text>K(+)(out) + ATP + H2O = K(+)(in) + ADP + phosphate + H(+)</text>
        <dbReference type="Rhea" id="RHEA:16777"/>
        <dbReference type="ChEBI" id="CHEBI:15377"/>
        <dbReference type="ChEBI" id="CHEBI:15378"/>
        <dbReference type="ChEBI" id="CHEBI:29103"/>
        <dbReference type="ChEBI" id="CHEBI:30616"/>
        <dbReference type="ChEBI" id="CHEBI:43474"/>
        <dbReference type="ChEBI" id="CHEBI:456216"/>
        <dbReference type="EC" id="7.2.2.6"/>
    </reaction>
    <physiologicalReaction direction="left-to-right" evidence="1">
        <dbReference type="Rhea" id="RHEA:16778"/>
    </physiologicalReaction>
</comment>
<comment type="subunit">
    <text evidence="1">The system is composed of three essential subunits: KdpA, KdpB and KdpC.</text>
</comment>
<comment type="subcellular location">
    <subcellularLocation>
        <location evidence="1">Cell inner membrane</location>
        <topology evidence="1">Multi-pass membrane protein</topology>
    </subcellularLocation>
</comment>
<comment type="similarity">
    <text evidence="1">Belongs to the cation transport ATPase (P-type) (TC 3.A.3) family. Type IA subfamily.</text>
</comment>
<feature type="chain" id="PRO_1000022437" description="Potassium-transporting ATPase ATP-binding subunit">
    <location>
        <begin position="1"/>
        <end position="688"/>
    </location>
</feature>
<feature type="transmembrane region" description="Helical" evidence="1">
    <location>
        <begin position="35"/>
        <end position="55"/>
    </location>
</feature>
<feature type="transmembrane region" description="Helical" evidence="1">
    <location>
        <begin position="62"/>
        <end position="82"/>
    </location>
</feature>
<feature type="transmembrane region" description="Helical" evidence="1">
    <location>
        <begin position="219"/>
        <end position="239"/>
    </location>
</feature>
<feature type="transmembrane region" description="Helical" evidence="1">
    <location>
        <begin position="260"/>
        <end position="280"/>
    </location>
</feature>
<feature type="transmembrane region" description="Helical" evidence="1">
    <location>
        <begin position="594"/>
        <end position="614"/>
    </location>
</feature>
<feature type="transmembrane region" description="Helical" evidence="1">
    <location>
        <begin position="622"/>
        <end position="642"/>
    </location>
</feature>
<feature type="transmembrane region" description="Helical" evidence="1">
    <location>
        <begin position="668"/>
        <end position="688"/>
    </location>
</feature>
<feature type="active site" description="4-aspartylphosphate intermediate" evidence="1">
    <location>
        <position position="313"/>
    </location>
</feature>
<feature type="binding site" evidence="1">
    <location>
        <position position="350"/>
    </location>
    <ligand>
        <name>ATP</name>
        <dbReference type="ChEBI" id="CHEBI:30616"/>
    </ligand>
</feature>
<feature type="binding site" evidence="1">
    <location>
        <position position="354"/>
    </location>
    <ligand>
        <name>ATP</name>
        <dbReference type="ChEBI" id="CHEBI:30616"/>
    </ligand>
</feature>
<feature type="binding site" evidence="1">
    <location>
        <begin position="383"/>
        <end position="390"/>
    </location>
    <ligand>
        <name>ATP</name>
        <dbReference type="ChEBI" id="CHEBI:30616"/>
    </ligand>
</feature>
<feature type="binding site" evidence="1">
    <location>
        <position position="401"/>
    </location>
    <ligand>
        <name>ATP</name>
        <dbReference type="ChEBI" id="CHEBI:30616"/>
    </ligand>
</feature>
<feature type="binding site" evidence="1">
    <location>
        <position position="524"/>
    </location>
    <ligand>
        <name>Mg(2+)</name>
        <dbReference type="ChEBI" id="CHEBI:18420"/>
    </ligand>
</feature>
<feature type="binding site" evidence="1">
    <location>
        <position position="528"/>
    </location>
    <ligand>
        <name>Mg(2+)</name>
        <dbReference type="ChEBI" id="CHEBI:18420"/>
    </ligand>
</feature>
<dbReference type="EC" id="7.2.2.6" evidence="1"/>
<dbReference type="EMBL" id="CP000089">
    <property type="protein sequence ID" value="AAZ45842.1"/>
    <property type="molecule type" value="Genomic_DNA"/>
</dbReference>
<dbReference type="SMR" id="Q47H39"/>
<dbReference type="STRING" id="159087.Daro_1086"/>
<dbReference type="KEGG" id="dar:Daro_1086"/>
<dbReference type="eggNOG" id="COG2216">
    <property type="taxonomic scope" value="Bacteria"/>
</dbReference>
<dbReference type="HOGENOM" id="CLU_025728_2_0_4"/>
<dbReference type="OrthoDB" id="9814270at2"/>
<dbReference type="GO" id="GO:0005886">
    <property type="term" value="C:plasma membrane"/>
    <property type="evidence" value="ECO:0007669"/>
    <property type="project" value="UniProtKB-SubCell"/>
</dbReference>
<dbReference type="GO" id="GO:0005524">
    <property type="term" value="F:ATP binding"/>
    <property type="evidence" value="ECO:0007669"/>
    <property type="project" value="UniProtKB-UniRule"/>
</dbReference>
<dbReference type="GO" id="GO:0016887">
    <property type="term" value="F:ATP hydrolysis activity"/>
    <property type="evidence" value="ECO:0007669"/>
    <property type="project" value="InterPro"/>
</dbReference>
<dbReference type="GO" id="GO:0000287">
    <property type="term" value="F:magnesium ion binding"/>
    <property type="evidence" value="ECO:0007669"/>
    <property type="project" value="UniProtKB-UniRule"/>
</dbReference>
<dbReference type="GO" id="GO:0008556">
    <property type="term" value="F:P-type potassium transmembrane transporter activity"/>
    <property type="evidence" value="ECO:0007669"/>
    <property type="project" value="UniProtKB-UniRule"/>
</dbReference>
<dbReference type="CDD" id="cd02078">
    <property type="entry name" value="P-type_ATPase_K"/>
    <property type="match status" value="1"/>
</dbReference>
<dbReference type="FunFam" id="2.70.150.10:FF:000010">
    <property type="entry name" value="Potassium-transporting ATPase ATP-binding subunit"/>
    <property type="match status" value="1"/>
</dbReference>
<dbReference type="FunFam" id="3.40.1110.10:FF:000007">
    <property type="entry name" value="Potassium-transporting ATPase ATP-binding subunit"/>
    <property type="match status" value="1"/>
</dbReference>
<dbReference type="Gene3D" id="3.40.1110.10">
    <property type="entry name" value="Calcium-transporting ATPase, cytoplasmic domain N"/>
    <property type="match status" value="1"/>
</dbReference>
<dbReference type="Gene3D" id="2.70.150.10">
    <property type="entry name" value="Calcium-transporting ATPase, cytoplasmic transduction domain A"/>
    <property type="match status" value="1"/>
</dbReference>
<dbReference type="Gene3D" id="3.40.50.1000">
    <property type="entry name" value="HAD superfamily/HAD-like"/>
    <property type="match status" value="1"/>
</dbReference>
<dbReference type="HAMAP" id="MF_00285">
    <property type="entry name" value="KdpB"/>
    <property type="match status" value="1"/>
</dbReference>
<dbReference type="InterPro" id="IPR023299">
    <property type="entry name" value="ATPase_P-typ_cyto_dom_N"/>
</dbReference>
<dbReference type="InterPro" id="IPR018303">
    <property type="entry name" value="ATPase_P-typ_P_site"/>
</dbReference>
<dbReference type="InterPro" id="IPR023298">
    <property type="entry name" value="ATPase_P-typ_TM_dom_sf"/>
</dbReference>
<dbReference type="InterPro" id="IPR008250">
    <property type="entry name" value="ATPase_P-typ_transduc_dom_A_sf"/>
</dbReference>
<dbReference type="InterPro" id="IPR036412">
    <property type="entry name" value="HAD-like_sf"/>
</dbReference>
<dbReference type="InterPro" id="IPR023214">
    <property type="entry name" value="HAD_sf"/>
</dbReference>
<dbReference type="InterPro" id="IPR006391">
    <property type="entry name" value="P-type_ATPase_bsu_IA"/>
</dbReference>
<dbReference type="InterPro" id="IPR001757">
    <property type="entry name" value="P_typ_ATPase"/>
</dbReference>
<dbReference type="InterPro" id="IPR044492">
    <property type="entry name" value="P_typ_ATPase_HD_dom"/>
</dbReference>
<dbReference type="NCBIfam" id="TIGR01494">
    <property type="entry name" value="ATPase_P-type"/>
    <property type="match status" value="2"/>
</dbReference>
<dbReference type="NCBIfam" id="TIGR01497">
    <property type="entry name" value="kdpB"/>
    <property type="match status" value="1"/>
</dbReference>
<dbReference type="PANTHER" id="PTHR43743">
    <property type="entry name" value="POTASSIUM-TRANSPORTING ATPASE ATP-BINDING SUBUNIT"/>
    <property type="match status" value="1"/>
</dbReference>
<dbReference type="PANTHER" id="PTHR43743:SF1">
    <property type="entry name" value="POTASSIUM-TRANSPORTING ATPASE ATP-BINDING SUBUNIT"/>
    <property type="match status" value="1"/>
</dbReference>
<dbReference type="Pfam" id="PF00122">
    <property type="entry name" value="E1-E2_ATPase"/>
    <property type="match status" value="1"/>
</dbReference>
<dbReference type="Pfam" id="PF00702">
    <property type="entry name" value="Hydrolase"/>
    <property type="match status" value="1"/>
</dbReference>
<dbReference type="PRINTS" id="PR00119">
    <property type="entry name" value="CATATPASE"/>
</dbReference>
<dbReference type="SFLD" id="SFLDS00003">
    <property type="entry name" value="Haloacid_Dehalogenase"/>
    <property type="match status" value="1"/>
</dbReference>
<dbReference type="SFLD" id="SFLDF00027">
    <property type="entry name" value="p-type_atpase"/>
    <property type="match status" value="1"/>
</dbReference>
<dbReference type="SUPFAM" id="SSF81653">
    <property type="entry name" value="Calcium ATPase, transduction domain A"/>
    <property type="match status" value="1"/>
</dbReference>
<dbReference type="SUPFAM" id="SSF81665">
    <property type="entry name" value="Calcium ATPase, transmembrane domain M"/>
    <property type="match status" value="1"/>
</dbReference>
<dbReference type="SUPFAM" id="SSF56784">
    <property type="entry name" value="HAD-like"/>
    <property type="match status" value="1"/>
</dbReference>
<dbReference type="PROSITE" id="PS00154">
    <property type="entry name" value="ATPASE_E1_E2"/>
    <property type="match status" value="1"/>
</dbReference>
<sequence length="688" mass="72581">MTRKTFTLFDPTLALPAIADAFRKLNPAVQWRNPVMFVVYVGSILTTILWVQALGGQGEAPAGFILAITIWLWFTVLFANFAEALAEGRSKAQAASLRGLKKETWAKKLAEPRFGAQWQMTPAADLRKGDVIVVQAQETIPADGEVIEGVASVDESAITGESAPVIRESGGDFSAVTGGTRVLSDWIVVRVTVNPGETFVDRMIAMVENAKRQKTPNEIALTILLVALTIVFLGVIVTLLPFSMFSVEVAGAGTPISITVLIALLVCLIPTTIAGLLSAIGVAGMSRMMQANVIATSGRAVEAAGDVDVLLMDKTGTITLGNRQASVFLPADGVSEAELADAAQLASLADETPEGRSIVVLAKQRFQLRERDIHALDAHFVHFSAHTRMSGVDMAGRQVRKGAADAIRKHVEALGGKFPASVSGYVDEVARRGSTPLVVADGTRVMGVIELKDIVKGGIKERFAELRKMGIKTVMVTGDNRVTAAAIAAEAGVDDFLSEATPEAKLALIRKYQAEGRLVAMTGDGTNDAPALAQADVAVAMNTGTQAAKEAGNMVDLDSNPTKLIEVVETGKQMLMTRGSLTTFSIANDIAKYFAIIPAAFVTTYPQLAALNVMGLASPASAILSAVIFNALIIVFLIPLALKGVKYRPLGAATLLRQNLAIYGLGGVIVPFIGIKLIDLAIAAVGLA</sequence>
<accession>Q47H39</accession>
<gene>
    <name evidence="1" type="primary">kdpB</name>
    <name type="ordered locus">Daro_1086</name>
</gene>
<name>KDPB_DECAR</name>
<organism>
    <name type="scientific">Dechloromonas aromatica (strain RCB)</name>
    <dbReference type="NCBI Taxonomy" id="159087"/>
    <lineage>
        <taxon>Bacteria</taxon>
        <taxon>Pseudomonadati</taxon>
        <taxon>Pseudomonadota</taxon>
        <taxon>Betaproteobacteria</taxon>
        <taxon>Rhodocyclales</taxon>
        <taxon>Azonexaceae</taxon>
        <taxon>Dechloromonas</taxon>
    </lineage>
</organism>
<evidence type="ECO:0000255" key="1">
    <source>
        <dbReference type="HAMAP-Rule" id="MF_00285"/>
    </source>
</evidence>
<keyword id="KW-0067">ATP-binding</keyword>
<keyword id="KW-0997">Cell inner membrane</keyword>
<keyword id="KW-1003">Cell membrane</keyword>
<keyword id="KW-0406">Ion transport</keyword>
<keyword id="KW-0460">Magnesium</keyword>
<keyword id="KW-0472">Membrane</keyword>
<keyword id="KW-0479">Metal-binding</keyword>
<keyword id="KW-0547">Nucleotide-binding</keyword>
<keyword id="KW-0597">Phosphoprotein</keyword>
<keyword id="KW-0630">Potassium</keyword>
<keyword id="KW-0633">Potassium transport</keyword>
<keyword id="KW-1278">Translocase</keyword>
<keyword id="KW-0812">Transmembrane</keyword>
<keyword id="KW-1133">Transmembrane helix</keyword>
<keyword id="KW-0813">Transport</keyword>
<protein>
    <recommendedName>
        <fullName evidence="1">Potassium-transporting ATPase ATP-binding subunit</fullName>
        <ecNumber evidence="1">7.2.2.6</ecNumber>
    </recommendedName>
    <alternativeName>
        <fullName evidence="1">ATP phosphohydrolase [potassium-transporting] B chain</fullName>
    </alternativeName>
    <alternativeName>
        <fullName evidence="1">Potassium-binding and translocating subunit B</fullName>
    </alternativeName>
    <alternativeName>
        <fullName evidence="1">Potassium-translocating ATPase B chain</fullName>
    </alternativeName>
</protein>
<proteinExistence type="inferred from homology"/>
<reference key="1">
    <citation type="journal article" date="2009" name="BMC Genomics">
        <title>Metabolic analysis of the soil microbe Dechloromonas aromatica str. RCB: indications of a surprisingly complex life-style and cryptic anaerobic pathways for aromatic degradation.</title>
        <authorList>
            <person name="Salinero K.K."/>
            <person name="Keller K."/>
            <person name="Feil W.S."/>
            <person name="Feil H."/>
            <person name="Trong S."/>
            <person name="Di Bartolo G."/>
            <person name="Lapidus A."/>
        </authorList>
    </citation>
    <scope>NUCLEOTIDE SEQUENCE [LARGE SCALE GENOMIC DNA]</scope>
    <source>
        <strain>RCB</strain>
    </source>
</reference>